<proteinExistence type="inferred from homology"/>
<name>PCRB_BACAA</name>
<gene>
    <name evidence="1" type="primary">pcrB</name>
    <name type="ordered locus">BAA_0358</name>
</gene>
<comment type="function">
    <text evidence="1">Prenyltransferase that catalyzes in vivo the transfer of the heptaprenyl moiety of heptaprenyl pyrophosphate (HepPP; 35 carbon atoms) to the C3 hydroxyl of sn-glycerol-1-phosphate (G1P), producing heptaprenylglyceryl phosphate (HepGP). This reaction is an ether-bond-formation step in the biosynthesis of archaea-type G1P-based membrane lipids found in Bacillales.</text>
</comment>
<comment type="catalytic activity">
    <reaction evidence="1">
        <text>sn-glycerol 1-phosphate + all-trans-heptaprenyl diphosphate = 3-heptaprenyl-sn-glycero-1-phosphate + diphosphate</text>
        <dbReference type="Rhea" id="RHEA:33495"/>
        <dbReference type="ChEBI" id="CHEBI:33019"/>
        <dbReference type="ChEBI" id="CHEBI:57685"/>
        <dbReference type="ChEBI" id="CHEBI:58206"/>
        <dbReference type="ChEBI" id="CHEBI:64781"/>
        <dbReference type="EC" id="2.5.1.n9"/>
    </reaction>
</comment>
<comment type="cofactor">
    <cofactor evidence="1">
        <name>Mg(2+)</name>
        <dbReference type="ChEBI" id="CHEBI:18420"/>
    </cofactor>
</comment>
<comment type="pathway">
    <text evidence="1">Membrane lipid metabolism; glycerophospholipid metabolism.</text>
</comment>
<comment type="subunit">
    <text evidence="1">Homodimer.</text>
</comment>
<comment type="similarity">
    <text evidence="1">Belongs to the GGGP/HepGP synthase family. Group I subfamily.</text>
</comment>
<sequence>MYDISGWKHVFKLDPNKELSDEHLEMICESGTDAVIVGGSDGVTIDNVLHMLVSIRRYAVPCVLEVSDVEAITPGFDFYYIPSVLNSRKVEWVTGVHHEALKEFGDIMDWDEIFMEGYCVLNPEAKVAQLTDAKCDVTEDDVIAYARLADKLLRLPIFYLEYSGTYGDVELVKNVKAELKQAKLYYGGGISNAEQAKEMAQHADTVVVGNIIYDDIKAALKTVKAVKGE</sequence>
<accession>C3PBN9</accession>
<dbReference type="EC" id="2.5.1.n9" evidence="1"/>
<dbReference type="EMBL" id="CP001598">
    <property type="protein sequence ID" value="ACQ46646.1"/>
    <property type="molecule type" value="Genomic_DNA"/>
</dbReference>
<dbReference type="RefSeq" id="WP_000272089.1">
    <property type="nucleotide sequence ID" value="NC_012659.1"/>
</dbReference>
<dbReference type="SMR" id="C3PBN9"/>
<dbReference type="GeneID" id="45020362"/>
<dbReference type="KEGG" id="bai:BAA_0358"/>
<dbReference type="HOGENOM" id="CLU_095211_0_0_9"/>
<dbReference type="UniPathway" id="UPA00940"/>
<dbReference type="GO" id="GO:0120536">
    <property type="term" value="F:heptaprenylglyceryl phosphate synthase activity"/>
    <property type="evidence" value="ECO:0007669"/>
    <property type="project" value="RHEA"/>
</dbReference>
<dbReference type="GO" id="GO:0000287">
    <property type="term" value="F:magnesium ion binding"/>
    <property type="evidence" value="ECO:0007669"/>
    <property type="project" value="UniProtKB-UniRule"/>
</dbReference>
<dbReference type="GO" id="GO:0046474">
    <property type="term" value="P:glycerophospholipid biosynthetic process"/>
    <property type="evidence" value="ECO:0007669"/>
    <property type="project" value="UniProtKB-UniRule"/>
</dbReference>
<dbReference type="CDD" id="cd02812">
    <property type="entry name" value="PcrB_like"/>
    <property type="match status" value="1"/>
</dbReference>
<dbReference type="FunFam" id="3.20.20.390:FF:000001">
    <property type="entry name" value="Heptaprenylglyceryl phosphate synthase"/>
    <property type="match status" value="1"/>
</dbReference>
<dbReference type="Gene3D" id="3.20.20.390">
    <property type="entry name" value="FMN-linked oxidoreductases"/>
    <property type="match status" value="1"/>
</dbReference>
<dbReference type="HAMAP" id="MF_00112">
    <property type="entry name" value="GGGP_HepGP_synthase"/>
    <property type="match status" value="1"/>
</dbReference>
<dbReference type="InterPro" id="IPR039074">
    <property type="entry name" value="GGGP/HepGP_synthase_I"/>
</dbReference>
<dbReference type="InterPro" id="IPR038597">
    <property type="entry name" value="GGGP/HepGP_synthase_sf"/>
</dbReference>
<dbReference type="InterPro" id="IPR008205">
    <property type="entry name" value="GGGP_HepGP_synthase"/>
</dbReference>
<dbReference type="NCBIfam" id="TIGR01768">
    <property type="entry name" value="GGGP-family"/>
    <property type="match status" value="1"/>
</dbReference>
<dbReference type="NCBIfam" id="NF003197">
    <property type="entry name" value="PRK04169.1-1"/>
    <property type="match status" value="1"/>
</dbReference>
<dbReference type="NCBIfam" id="NF003199">
    <property type="entry name" value="PRK04169.1-3"/>
    <property type="match status" value="1"/>
</dbReference>
<dbReference type="PANTHER" id="PTHR40029">
    <property type="match status" value="1"/>
</dbReference>
<dbReference type="PANTHER" id="PTHR40029:SF2">
    <property type="entry name" value="HEPTAPRENYLGLYCERYL PHOSPHATE SYNTHASE"/>
    <property type="match status" value="1"/>
</dbReference>
<dbReference type="Pfam" id="PF01884">
    <property type="entry name" value="PcrB"/>
    <property type="match status" value="1"/>
</dbReference>
<dbReference type="SUPFAM" id="SSF51395">
    <property type="entry name" value="FMN-linked oxidoreductases"/>
    <property type="match status" value="1"/>
</dbReference>
<protein>
    <recommendedName>
        <fullName evidence="1">Heptaprenylglyceryl phosphate synthase</fullName>
        <shortName evidence="1">HepGP synthase</shortName>
        <ecNumber evidence="1">2.5.1.n9</ecNumber>
    </recommendedName>
    <alternativeName>
        <fullName evidence="1">Glycerol-1-phosphate heptaprenyltransferase</fullName>
    </alternativeName>
</protein>
<organism>
    <name type="scientific">Bacillus anthracis (strain A0248)</name>
    <dbReference type="NCBI Taxonomy" id="592021"/>
    <lineage>
        <taxon>Bacteria</taxon>
        <taxon>Bacillati</taxon>
        <taxon>Bacillota</taxon>
        <taxon>Bacilli</taxon>
        <taxon>Bacillales</taxon>
        <taxon>Bacillaceae</taxon>
        <taxon>Bacillus</taxon>
        <taxon>Bacillus cereus group</taxon>
    </lineage>
</organism>
<reference key="1">
    <citation type="submission" date="2009-04" db="EMBL/GenBank/DDBJ databases">
        <title>Genome sequence of Bacillus anthracis A0248.</title>
        <authorList>
            <person name="Dodson R.J."/>
            <person name="Munk A.C."/>
            <person name="Bruce D."/>
            <person name="Detter C."/>
            <person name="Tapia R."/>
            <person name="Sutton G."/>
            <person name="Sims D."/>
            <person name="Brettin T."/>
        </authorList>
    </citation>
    <scope>NUCLEOTIDE SEQUENCE [LARGE SCALE GENOMIC DNA]</scope>
    <source>
        <strain>A0248</strain>
    </source>
</reference>
<feature type="chain" id="PRO_1000119129" description="Heptaprenylglyceryl phosphate synthase">
    <location>
        <begin position="1"/>
        <end position="229"/>
    </location>
</feature>
<feature type="binding site" evidence="1">
    <location>
        <position position="12"/>
    </location>
    <ligand>
        <name>sn-glycerol 1-phosphate</name>
        <dbReference type="ChEBI" id="CHEBI:57685"/>
    </ligand>
</feature>
<feature type="binding site" evidence="1">
    <location>
        <position position="14"/>
    </location>
    <ligand>
        <name>Mg(2+)</name>
        <dbReference type="ChEBI" id="CHEBI:18420"/>
    </ligand>
</feature>
<feature type="binding site" evidence="1">
    <location>
        <position position="40"/>
    </location>
    <ligand>
        <name>Mg(2+)</name>
        <dbReference type="ChEBI" id="CHEBI:18420"/>
    </ligand>
</feature>
<feature type="binding site" evidence="1">
    <location>
        <begin position="159"/>
        <end position="164"/>
    </location>
    <ligand>
        <name>sn-glycerol 1-phosphate</name>
        <dbReference type="ChEBI" id="CHEBI:57685"/>
    </ligand>
</feature>
<feature type="binding site" evidence="1">
    <location>
        <position position="189"/>
    </location>
    <ligand>
        <name>sn-glycerol 1-phosphate</name>
        <dbReference type="ChEBI" id="CHEBI:57685"/>
    </ligand>
</feature>
<feature type="binding site" evidence="1">
    <location>
        <begin position="209"/>
        <end position="210"/>
    </location>
    <ligand>
        <name>sn-glycerol 1-phosphate</name>
        <dbReference type="ChEBI" id="CHEBI:57685"/>
    </ligand>
</feature>
<evidence type="ECO:0000255" key="1">
    <source>
        <dbReference type="HAMAP-Rule" id="MF_00112"/>
    </source>
</evidence>
<keyword id="KW-0444">Lipid biosynthesis</keyword>
<keyword id="KW-0443">Lipid metabolism</keyword>
<keyword id="KW-0460">Magnesium</keyword>
<keyword id="KW-0479">Metal-binding</keyword>
<keyword id="KW-0594">Phospholipid biosynthesis</keyword>
<keyword id="KW-1208">Phospholipid metabolism</keyword>
<keyword id="KW-0808">Transferase</keyword>